<accession>A5VQZ2</accession>
<dbReference type="EMBL" id="CP000708">
    <property type="protein sequence ID" value="ABQ60905.1"/>
    <property type="molecule type" value="Genomic_DNA"/>
</dbReference>
<dbReference type="RefSeq" id="WP_004683921.1">
    <property type="nucleotide sequence ID" value="NC_009505.1"/>
</dbReference>
<dbReference type="SMR" id="A5VQZ2"/>
<dbReference type="GeneID" id="97533538"/>
<dbReference type="KEGG" id="bov:BOV_1182"/>
<dbReference type="HOGENOM" id="CLU_098428_0_0_5"/>
<dbReference type="Proteomes" id="UP000006383">
    <property type="component" value="Chromosome I"/>
</dbReference>
<dbReference type="GO" id="GO:1990904">
    <property type="term" value="C:ribonucleoprotein complex"/>
    <property type="evidence" value="ECO:0007669"/>
    <property type="project" value="UniProtKB-KW"/>
</dbReference>
<dbReference type="GO" id="GO:0005840">
    <property type="term" value="C:ribosome"/>
    <property type="evidence" value="ECO:0007669"/>
    <property type="project" value="UniProtKB-KW"/>
</dbReference>
<dbReference type="GO" id="GO:0019843">
    <property type="term" value="F:rRNA binding"/>
    <property type="evidence" value="ECO:0007669"/>
    <property type="project" value="UniProtKB-UniRule"/>
</dbReference>
<dbReference type="GO" id="GO:0003735">
    <property type="term" value="F:structural constituent of ribosome"/>
    <property type="evidence" value="ECO:0007669"/>
    <property type="project" value="InterPro"/>
</dbReference>
<dbReference type="GO" id="GO:0006412">
    <property type="term" value="P:translation"/>
    <property type="evidence" value="ECO:0007669"/>
    <property type="project" value="UniProtKB-UniRule"/>
</dbReference>
<dbReference type="FunFam" id="3.30.1370.30:FF:000002">
    <property type="entry name" value="30S ribosomal protein S8"/>
    <property type="match status" value="1"/>
</dbReference>
<dbReference type="FunFam" id="3.30.1490.10:FF:000001">
    <property type="entry name" value="30S ribosomal protein S8"/>
    <property type="match status" value="1"/>
</dbReference>
<dbReference type="Gene3D" id="3.30.1370.30">
    <property type="match status" value="1"/>
</dbReference>
<dbReference type="Gene3D" id="3.30.1490.10">
    <property type="match status" value="1"/>
</dbReference>
<dbReference type="HAMAP" id="MF_01302_B">
    <property type="entry name" value="Ribosomal_uS8_B"/>
    <property type="match status" value="1"/>
</dbReference>
<dbReference type="InterPro" id="IPR000630">
    <property type="entry name" value="Ribosomal_uS8"/>
</dbReference>
<dbReference type="InterPro" id="IPR047863">
    <property type="entry name" value="Ribosomal_uS8_CS"/>
</dbReference>
<dbReference type="InterPro" id="IPR035987">
    <property type="entry name" value="Ribosomal_uS8_sf"/>
</dbReference>
<dbReference type="NCBIfam" id="NF001109">
    <property type="entry name" value="PRK00136.1"/>
    <property type="match status" value="1"/>
</dbReference>
<dbReference type="PANTHER" id="PTHR11758">
    <property type="entry name" value="40S RIBOSOMAL PROTEIN S15A"/>
    <property type="match status" value="1"/>
</dbReference>
<dbReference type="Pfam" id="PF00410">
    <property type="entry name" value="Ribosomal_S8"/>
    <property type="match status" value="1"/>
</dbReference>
<dbReference type="SUPFAM" id="SSF56047">
    <property type="entry name" value="Ribosomal protein S8"/>
    <property type="match status" value="1"/>
</dbReference>
<dbReference type="PROSITE" id="PS00053">
    <property type="entry name" value="RIBOSOMAL_S8"/>
    <property type="match status" value="1"/>
</dbReference>
<evidence type="ECO:0000255" key="1">
    <source>
        <dbReference type="HAMAP-Rule" id="MF_01302"/>
    </source>
</evidence>
<evidence type="ECO:0000305" key="2"/>
<organism>
    <name type="scientific">Brucella ovis (strain ATCC 25840 / 63/290 / NCTC 10512)</name>
    <dbReference type="NCBI Taxonomy" id="444178"/>
    <lineage>
        <taxon>Bacteria</taxon>
        <taxon>Pseudomonadati</taxon>
        <taxon>Pseudomonadota</taxon>
        <taxon>Alphaproteobacteria</taxon>
        <taxon>Hyphomicrobiales</taxon>
        <taxon>Brucellaceae</taxon>
        <taxon>Brucella/Ochrobactrum group</taxon>
        <taxon>Brucella</taxon>
    </lineage>
</organism>
<reference key="1">
    <citation type="journal article" date="2009" name="PLoS ONE">
        <title>Genome degradation in Brucella ovis corresponds with narrowing of its host range and tissue tropism.</title>
        <authorList>
            <person name="Tsolis R.M."/>
            <person name="Seshadri R."/>
            <person name="Santos R.L."/>
            <person name="Sangari F.J."/>
            <person name="Lobo J.M."/>
            <person name="de Jong M.F."/>
            <person name="Ren Q."/>
            <person name="Myers G."/>
            <person name="Brinkac L.M."/>
            <person name="Nelson W.C."/>
            <person name="Deboy R.T."/>
            <person name="Angiuoli S."/>
            <person name="Khouri H."/>
            <person name="Dimitrov G."/>
            <person name="Robinson J.R."/>
            <person name="Mulligan S."/>
            <person name="Walker R.L."/>
            <person name="Elzer P.E."/>
            <person name="Hassan K.A."/>
            <person name="Paulsen I.T."/>
        </authorList>
    </citation>
    <scope>NUCLEOTIDE SEQUENCE [LARGE SCALE GENOMIC DNA]</scope>
    <source>
        <strain>ATCC 25840 / 63/290 / NCTC 10512</strain>
    </source>
</reference>
<sequence length="132" mass="14604">MSVSDPLGDMLTRIRNAVGRKKTKVSTPASKLRARVLDVLQAEGYIRGYTQSEFENGKAEIEIELKYYEGVPVIREITRVSKPGRRVYVSVKSIPQVANGLGISILSTPKGVMADHEAREQNVGGELLCRIF</sequence>
<comment type="function">
    <text evidence="1">One of the primary rRNA binding proteins, it binds directly to 16S rRNA central domain where it helps coordinate assembly of the platform of the 30S subunit.</text>
</comment>
<comment type="subunit">
    <text evidence="1">Part of the 30S ribosomal subunit. Contacts proteins S5 and S12.</text>
</comment>
<comment type="similarity">
    <text evidence="1">Belongs to the universal ribosomal protein uS8 family.</text>
</comment>
<gene>
    <name evidence="1" type="primary">rpsH</name>
    <name type="ordered locus">BOV_1182</name>
</gene>
<keyword id="KW-0687">Ribonucleoprotein</keyword>
<keyword id="KW-0689">Ribosomal protein</keyword>
<keyword id="KW-0694">RNA-binding</keyword>
<keyword id="KW-0699">rRNA-binding</keyword>
<name>RS8_BRUO2</name>
<feature type="chain" id="PRO_0000305738" description="Small ribosomal subunit protein uS8">
    <location>
        <begin position="1"/>
        <end position="132"/>
    </location>
</feature>
<proteinExistence type="inferred from homology"/>
<protein>
    <recommendedName>
        <fullName evidence="1">Small ribosomal subunit protein uS8</fullName>
    </recommendedName>
    <alternativeName>
        <fullName evidence="2">30S ribosomal protein S8</fullName>
    </alternativeName>
</protein>